<reference key="1">
    <citation type="journal article" date="2005" name="Science">
        <title>The transcriptional landscape of the mammalian genome.</title>
        <authorList>
            <person name="Carninci P."/>
            <person name="Kasukawa T."/>
            <person name="Katayama S."/>
            <person name="Gough J."/>
            <person name="Frith M.C."/>
            <person name="Maeda N."/>
            <person name="Oyama R."/>
            <person name="Ravasi T."/>
            <person name="Lenhard B."/>
            <person name="Wells C."/>
            <person name="Kodzius R."/>
            <person name="Shimokawa K."/>
            <person name="Bajic V.B."/>
            <person name="Brenner S.E."/>
            <person name="Batalov S."/>
            <person name="Forrest A.R."/>
            <person name="Zavolan M."/>
            <person name="Davis M.J."/>
            <person name="Wilming L.G."/>
            <person name="Aidinis V."/>
            <person name="Allen J.E."/>
            <person name="Ambesi-Impiombato A."/>
            <person name="Apweiler R."/>
            <person name="Aturaliya R.N."/>
            <person name="Bailey T.L."/>
            <person name="Bansal M."/>
            <person name="Baxter L."/>
            <person name="Beisel K.W."/>
            <person name="Bersano T."/>
            <person name="Bono H."/>
            <person name="Chalk A.M."/>
            <person name="Chiu K.P."/>
            <person name="Choudhary V."/>
            <person name="Christoffels A."/>
            <person name="Clutterbuck D.R."/>
            <person name="Crowe M.L."/>
            <person name="Dalla E."/>
            <person name="Dalrymple B.P."/>
            <person name="de Bono B."/>
            <person name="Della Gatta G."/>
            <person name="di Bernardo D."/>
            <person name="Down T."/>
            <person name="Engstrom P."/>
            <person name="Fagiolini M."/>
            <person name="Faulkner G."/>
            <person name="Fletcher C.F."/>
            <person name="Fukushima T."/>
            <person name="Furuno M."/>
            <person name="Futaki S."/>
            <person name="Gariboldi M."/>
            <person name="Georgii-Hemming P."/>
            <person name="Gingeras T.R."/>
            <person name="Gojobori T."/>
            <person name="Green R.E."/>
            <person name="Gustincich S."/>
            <person name="Harbers M."/>
            <person name="Hayashi Y."/>
            <person name="Hensch T.K."/>
            <person name="Hirokawa N."/>
            <person name="Hill D."/>
            <person name="Huminiecki L."/>
            <person name="Iacono M."/>
            <person name="Ikeo K."/>
            <person name="Iwama A."/>
            <person name="Ishikawa T."/>
            <person name="Jakt M."/>
            <person name="Kanapin A."/>
            <person name="Katoh M."/>
            <person name="Kawasawa Y."/>
            <person name="Kelso J."/>
            <person name="Kitamura H."/>
            <person name="Kitano H."/>
            <person name="Kollias G."/>
            <person name="Krishnan S.P."/>
            <person name="Kruger A."/>
            <person name="Kummerfeld S.K."/>
            <person name="Kurochkin I.V."/>
            <person name="Lareau L.F."/>
            <person name="Lazarevic D."/>
            <person name="Lipovich L."/>
            <person name="Liu J."/>
            <person name="Liuni S."/>
            <person name="McWilliam S."/>
            <person name="Madan Babu M."/>
            <person name="Madera M."/>
            <person name="Marchionni L."/>
            <person name="Matsuda H."/>
            <person name="Matsuzawa S."/>
            <person name="Miki H."/>
            <person name="Mignone F."/>
            <person name="Miyake S."/>
            <person name="Morris K."/>
            <person name="Mottagui-Tabar S."/>
            <person name="Mulder N."/>
            <person name="Nakano N."/>
            <person name="Nakauchi H."/>
            <person name="Ng P."/>
            <person name="Nilsson R."/>
            <person name="Nishiguchi S."/>
            <person name="Nishikawa S."/>
            <person name="Nori F."/>
            <person name="Ohara O."/>
            <person name="Okazaki Y."/>
            <person name="Orlando V."/>
            <person name="Pang K.C."/>
            <person name="Pavan W.J."/>
            <person name="Pavesi G."/>
            <person name="Pesole G."/>
            <person name="Petrovsky N."/>
            <person name="Piazza S."/>
            <person name="Reed J."/>
            <person name="Reid J.F."/>
            <person name="Ring B.Z."/>
            <person name="Ringwald M."/>
            <person name="Rost B."/>
            <person name="Ruan Y."/>
            <person name="Salzberg S.L."/>
            <person name="Sandelin A."/>
            <person name="Schneider C."/>
            <person name="Schoenbach C."/>
            <person name="Sekiguchi K."/>
            <person name="Semple C.A."/>
            <person name="Seno S."/>
            <person name="Sessa L."/>
            <person name="Sheng Y."/>
            <person name="Shibata Y."/>
            <person name="Shimada H."/>
            <person name="Shimada K."/>
            <person name="Silva D."/>
            <person name="Sinclair B."/>
            <person name="Sperling S."/>
            <person name="Stupka E."/>
            <person name="Sugiura K."/>
            <person name="Sultana R."/>
            <person name="Takenaka Y."/>
            <person name="Taki K."/>
            <person name="Tammoja K."/>
            <person name="Tan S.L."/>
            <person name="Tang S."/>
            <person name="Taylor M.S."/>
            <person name="Tegner J."/>
            <person name="Teichmann S.A."/>
            <person name="Ueda H.R."/>
            <person name="van Nimwegen E."/>
            <person name="Verardo R."/>
            <person name="Wei C.L."/>
            <person name="Yagi K."/>
            <person name="Yamanishi H."/>
            <person name="Zabarovsky E."/>
            <person name="Zhu S."/>
            <person name="Zimmer A."/>
            <person name="Hide W."/>
            <person name="Bult C."/>
            <person name="Grimmond S.M."/>
            <person name="Teasdale R.D."/>
            <person name="Liu E.T."/>
            <person name="Brusic V."/>
            <person name="Quackenbush J."/>
            <person name="Wahlestedt C."/>
            <person name="Mattick J.S."/>
            <person name="Hume D.A."/>
            <person name="Kai C."/>
            <person name="Sasaki D."/>
            <person name="Tomaru Y."/>
            <person name="Fukuda S."/>
            <person name="Kanamori-Katayama M."/>
            <person name="Suzuki M."/>
            <person name="Aoki J."/>
            <person name="Arakawa T."/>
            <person name="Iida J."/>
            <person name="Imamura K."/>
            <person name="Itoh M."/>
            <person name="Kato T."/>
            <person name="Kawaji H."/>
            <person name="Kawagashira N."/>
            <person name="Kawashima T."/>
            <person name="Kojima M."/>
            <person name="Kondo S."/>
            <person name="Konno H."/>
            <person name="Nakano K."/>
            <person name="Ninomiya N."/>
            <person name="Nishio T."/>
            <person name="Okada M."/>
            <person name="Plessy C."/>
            <person name="Shibata K."/>
            <person name="Shiraki T."/>
            <person name="Suzuki S."/>
            <person name="Tagami M."/>
            <person name="Waki K."/>
            <person name="Watahiki A."/>
            <person name="Okamura-Oho Y."/>
            <person name="Suzuki H."/>
            <person name="Kawai J."/>
            <person name="Hayashizaki Y."/>
        </authorList>
    </citation>
    <scope>NUCLEOTIDE SEQUENCE [LARGE SCALE MRNA]</scope>
    <source>
        <strain>C57BL/6J</strain>
        <tissue>Extraembryonic tissue</tissue>
        <tissue>Liver</tissue>
        <tissue>Placenta</tissue>
    </source>
</reference>
<reference key="2">
    <citation type="submission" date="2005-07" db="EMBL/GenBank/DDBJ databases">
        <title>Cloning of mouse full open reading frames in Gateway(R) system entry vector (pDONR201).</title>
        <authorList>
            <person name="Ebert L."/>
            <person name="Muenstermann E."/>
            <person name="Schatten R."/>
            <person name="Henze S."/>
            <person name="Bohn E."/>
            <person name="Mollenhauer J."/>
            <person name="Wiemann S."/>
            <person name="Schick M."/>
            <person name="Korn B."/>
        </authorList>
    </citation>
    <scope>NUCLEOTIDE SEQUENCE [LARGE SCALE MRNA]</scope>
</reference>
<reference key="3">
    <citation type="journal article" date="2004" name="Genome Res.">
        <title>The status, quality, and expansion of the NIH full-length cDNA project: the Mammalian Gene Collection (MGC).</title>
        <authorList>
            <consortium name="The MGC Project Team"/>
        </authorList>
    </citation>
    <scope>NUCLEOTIDE SEQUENCE [LARGE SCALE MRNA]</scope>
    <source>
        <tissue>Kidney</tissue>
    </source>
</reference>
<reference key="4">
    <citation type="journal article" date="2000" name="Cell. Microbiol.">
        <title>LaXp180, a mammalian ActA-binding protein, identified with the yeast two-hybrid system co-localizes with intracellular Listeria monocytogenes.</title>
        <authorList>
            <person name="Pfeuffer T."/>
            <person name="Goebel W."/>
            <person name="Laubinger J."/>
            <person name="Bachmann M."/>
            <person name="Kuhn M."/>
        </authorList>
    </citation>
    <scope>NUCLEOTIDE SEQUENCE [MRNA] OF 1-283</scope>
    <scope>INTERACTION WITH ACTA (MICROBIAL INFECTION)</scope>
    <source>
        <strain>CD-1</strain>
        <tissue>Embryo</tissue>
    </source>
</reference>
<reference key="5">
    <citation type="journal article" date="2010" name="Dev. Cell">
        <title>RNF8-dependent histone modifications regulate nucleosome removal during spermatogenesis.</title>
        <authorList>
            <person name="Lu L.Y."/>
            <person name="Wu J."/>
            <person name="Ye L."/>
            <person name="Gavrilina G.B."/>
            <person name="Saunders T.L."/>
            <person name="Yu X."/>
        </authorList>
    </citation>
    <scope>FUNCTION</scope>
    <scope>DISRUPTION PHENOTYPE</scope>
</reference>
<reference key="6">
    <citation type="journal article" date="2010" name="Proc. Natl. Acad. Sci. U.S.A.">
        <title>The RNF8/RNF168 ubiquitin ligase cascade facilitates class switch recombination.</title>
        <authorList>
            <person name="Ramachandran S."/>
            <person name="Chahwan R."/>
            <person name="Nepal R.M."/>
            <person name="Frieder D."/>
            <person name="Panier S."/>
            <person name="Roa S."/>
            <person name="Zaheen A."/>
            <person name="Durocher D."/>
            <person name="Scharff M.D."/>
            <person name="Martin A."/>
        </authorList>
    </citation>
    <scope>FUNCTION</scope>
</reference>
<reference key="7">
    <citation type="journal article" date="2011" name="Nat. Struct. Mol. Biol.">
        <title>Chfr and RNF8 synergistically regulate ATM activation.</title>
        <authorList>
            <person name="Wu J."/>
            <person name="Chen Y."/>
            <person name="Lu L.Y."/>
            <person name="Wu Y."/>
            <person name="Paulsen M.T."/>
            <person name="Ljungman M."/>
            <person name="Ferguson D.O."/>
            <person name="Yu X."/>
        </authorList>
    </citation>
    <scope>FUNCTION</scope>
    <scope>DISRUPTION PHENOTYPE</scope>
</reference>
<reference key="8">
    <citation type="journal article" date="2011" name="Nat. Cell Biol.">
        <title>DNA-damage response and repair activities at uncapped telomeres depend on RNF8.</title>
        <authorList>
            <person name="Peuscher M.H."/>
            <person name="Jacobs J.J."/>
        </authorList>
    </citation>
    <scope>FUNCTION</scope>
    <scope>SUBCELLULAR LOCATION</scope>
</reference>
<reference key="9">
    <citation type="journal article" date="2011" name="Nat. Struct. Mol. Biol.">
        <title>The E3 ubiquitin ligase Rnf8 stabilizes Tpp1 to promote telomere end protection.</title>
        <authorList>
            <person name="Rai R."/>
            <person name="Li J.M."/>
            <person name="Zheng H."/>
            <person name="Lok G.T."/>
            <person name="Deng Y."/>
            <person name="Huen M.S."/>
            <person name="Chen J."/>
            <person name="Jin J."/>
            <person name="Chang S."/>
        </authorList>
    </citation>
    <scope>SUBCELLULAR LOCATION</scope>
</reference>
<reference key="10">
    <citation type="journal article" date="2012" name="Nat. Struct. Mol. Biol.">
        <title>The E3 ligase RNF8 regulates KU80 removal and NHEJ repair.</title>
        <authorList>
            <person name="Feng L."/>
            <person name="Chen J."/>
        </authorList>
    </citation>
    <scope>FUNCTION</scope>
</reference>
<reference key="11">
    <citation type="journal article" date="2014" name="Cell Rep.">
        <title>GPS2/KDM4A pioneering activity regulates promoter-specific recruitment of PPARgamma.</title>
        <authorList>
            <person name="Cardamone M.D."/>
            <person name="Tanasa B."/>
            <person name="Chan M."/>
            <person name="Cederquist C.T."/>
            <person name="Andricovich J."/>
            <person name="Rosenfeld M.G."/>
            <person name="Perissi V."/>
        </authorList>
    </citation>
    <scope>FUNCTION</scope>
</reference>
<reference key="12">
    <citation type="journal article" date="2017" name="Cell">
        <title>Ubiquitination-deficient mutations in human Piwi cause male infertility by impairing histone-to-protamine exchange during spermiogenesis.</title>
        <authorList>
            <person name="Gou L.T."/>
            <person name="Kang J.Y."/>
            <person name="Dai P."/>
            <person name="Wang X."/>
            <person name="Li F."/>
            <person name="Zhao S."/>
            <person name="Zhang M."/>
            <person name="Hua M.M."/>
            <person name="Lu Y."/>
            <person name="Zhu Y."/>
            <person name="Li Z."/>
            <person name="Chen H."/>
            <person name="Wu L.G."/>
            <person name="Li D."/>
            <person name="Fu X.D."/>
            <person name="Li J."/>
            <person name="Shi H.J."/>
            <person name="Liu M.F."/>
        </authorList>
    </citation>
    <scope>SUBCELLULAR LOCATION</scope>
    <scope>INTERACTION WITH PIWIL1</scope>
    <scope>MUTAGENESIS OF 68-GLN--GLY-72</scope>
</reference>
<name>RNF8_MOUSE</name>
<comment type="function">
    <text evidence="2 5 6 7 8 10 11 12">E3 ubiquitin-protein ligase that plays a key role in DNA damage signaling via 2 distinct roles: by mediating the 'Lys-63'-linked ubiquitination of histones H2A and H2AX and promoting the recruitment of DNA repair proteins at double-strand breaks (DSBs) sites, and by catalyzing 'Lys-48'-linked ubiquitination to remove target proteins from DNA damage sites. Following DNA DSBs, it is recruited to the sites of damage by ATM-phosphorylated MDC1 and catalyzes the 'Lys-63'-linked ubiquitination of histones H2A and H2AX, thereby promoting the formation of TP53BP1 and BRCA1 ionizing radiation-induced foci (IRIF). Also controls the recruitment of UIMC1-BRCC3 (RAP80-BRCC36) and PAXIP1/PTIP to DNA damage sites. Promotes the recruitment of NBN to DNA damage sites by catalyzing 'Lys-6'-linked ubiquitination of NBN. Also recruited at DNA interstrand cross-links (ICLs) sites and catalyzes 'Lys-63'-linked ubiquitination of histones H2A and H2AX, leading to recruitment of FAAP20 and Fanconi anemia (FA) complex, followed by interstrand cross-link repair. H2A ubiquitination also mediates the ATM-dependent transcriptional silencing at regions flanking DSBs in cis, a mechanism to avoid collision between transcription and repair intermediates. Promotes the formation of 'Lys-63'-linked polyubiquitin chains via interactions with the specific ubiquitin-conjugating UBE2N/UBC13 and ubiquitinates non-histone substrates such as PCNA. Substrates that are polyubiquitinated at 'Lys-63' are usually not targeted for degradation. Also catalyzes the formation of 'Lys-48'-linked polyubiquitin chains via interaction with the ubiquitin-conjugating UBE2L6/UBCH8, leading to degradation of substrate proteins such as CHEK2, JMJD2A/KDM4A and KU80/XRCC5: it is still unclear how the preference toward 'Lys-48'- versus 'Lys-63'-linked ubiquitination is regulated but it could be due to RNF8 ability to interact with specific E2 specific ligases. For instance, interaction with phosphorylated HERC2 promotes the association between RNF8 and UBE2N/UBC13 and favors the specific formation of 'Lys-63'-linked ubiquitin chains. Promotes non-homologous end joining (NHEJ) by promoting the 'Lys-48'-linked ubiquitination and degradation the of KU80/XRCC5. Following DNA damage, mediates the ubiquitination and degradation of JMJD2A/KDM4A in collaboration with RNF168, leading to unmask H4K20me2 mark and promote the recruitment of TP53BP1 at DNA damage sites. Following DNA damage, mediates the ubiquitination and degradation of POLD4/p12, a subunit of DNA polymerase delta. In the absence of POLD4, DNA polymerase delta complex exhibits higher proofreading activity. In addition to its function in damage signaling, also plays a role in higher-order chromatin structure by mediating extensive chromatin decondensation. Involved in the activation of ATM by promoting histone H2B ubiquitination, which indirectly triggers histone H4 'Lys-16' acetylation (H4K16ac), establishing a chromatin environment that promotes efficient activation of ATM kinase. Required in the testis, where it plays a role in the replacement of histones during spermatogenesis (PubMed:20153262, PubMed:28552346). At uncapped telomeres, promotes the joining of deprotected chromosome ends by inducing H2A ubiquitination and TP53BP1 recruitment, suggesting that it may enhance cancer development by aggravating telomere-induced genome instability in case of telomeric crisis. Promotes the assembly of RAD51 at DNA DSBs in the absence of BRCA1 and TP53BP1 Also involved in class switch recombination in immune system, via its role in regulation of DSBs repair. May be required for proper exit from mitosis after spindle checkpoint activation and may regulate cytokinesis. May play a role in the regulation of RXRA-mediated transcriptional activity. Not involved in RXRA ubiquitination by UBE2E2.</text>
</comment>
<comment type="catalytic activity">
    <reaction evidence="2">
        <text>S-ubiquitinyl-[E2 ubiquitin-conjugating enzyme]-L-cysteine + [acceptor protein]-L-lysine = [E2 ubiquitin-conjugating enzyme]-L-cysteine + N(6)-ubiquitinyl-[acceptor protein]-L-lysine.</text>
        <dbReference type="EC" id="2.3.2.27"/>
    </reaction>
</comment>
<comment type="pathway">
    <text evidence="2">Protein modification; protein ubiquitination.</text>
</comment>
<comment type="subunit">
    <text evidence="2 12">Homodimer. Forms a E2-E3 ubiquitin ligase complex composed of the RNF8 homodimer and a E2 heterodimer of UBE2N and UBE2V2. Interacts with class III E2s, including UBE2E1, UBE2E2, and UBE2E3 and with UBE2N. Interacts with RXRA. Interacts (via FHA domain) with ATM-phosphorylated MDC1. Interacts (via FHA domain) with 'Thr-4829' phosphorylated HERC2 (via C-terminus) (By similarity). Interacts with PIWIL1; leading to sequester RNF8 in the cytoplasm (PubMed:28552346). Interacts with WRAP53/TCAB1 (By similarity).</text>
</comment>
<comment type="subunit">
    <text evidence="4">(Microbial infection) May interact with the L.monocytogenes protein actA; however, given these errors in the sequence (AJ242721), the relevance of the interaction with actA remains to be confirmed.</text>
</comment>
<comment type="interaction">
    <interactant intactId="EBI-15954293">
        <id>Q8VC56</id>
    </interactant>
    <interactant intactId="EBI-717666">
        <id>Q96AP0</id>
        <label>ACD</label>
    </interactant>
    <organismsDiffer>true</organismsDiffer>
    <experiments>2</experiments>
</comment>
<comment type="subcellular location">
    <subcellularLocation>
        <location evidence="2 12">Nucleus</location>
    </subcellularLocation>
    <subcellularLocation>
        <location evidence="2 12">Cytoplasm</location>
    </subcellularLocation>
    <subcellularLocation>
        <location evidence="2">Midbody</location>
    </subcellularLocation>
    <subcellularLocation>
        <location evidence="2 8 9">Chromosome</location>
        <location evidence="2 8 9">Telomere</location>
    </subcellularLocation>
    <text evidence="2 8 9 12">Recruited at uncapped telomeres (PubMed:21857671, PubMed:22101936). Following DNA double-strand breaks, recruited to the sites of damage. During prophase, concomitant with nuclear envelope breakdown, localizes throughout the cell, with a dotted pattern. In telophase, again in the nucleus and also with a discrete dotted pattern in the cytoplasm. In late telophase and during cytokinesis, localizes in the midbody of the tubulin bridge joining the daughter cells. Does not seem to be associated with condensed chromosomes at any time during the cell cycle (By similarity). During spermatogenesis, sequestered in the cytoplasm by PIWIL1: RNF8 is released following ubiquitination and degradation of PIWIL1 (PubMed:28552346).</text>
</comment>
<comment type="domain">
    <text evidence="1 2">The FHA domain specifically recognizes and binds ATM-phosphorylated MDC1 and phosphorylated HERC2 (By similarity). This domain is also required for proper recruitment to DNA damage sites after UV irradiation, ionizing radiation, or treatment with an alkylating agent (By similarity).</text>
</comment>
<comment type="PTM">
    <text evidence="2">Autoubiquitinated through 'Lys-48' and 'Lys-63' of ubiquitin. 'Lys-63' polyubiquitination is mediated by UBE2N. 'Lys-29'-type polyubiquitination is also observed, but it doesn't require its own functional RING-type zinc finger.</text>
</comment>
<comment type="disruption phenotype">
    <text evidence="6 7">Male mice are infertile, while females do not show defects. Male mice display defects in histone H2A and H2B ubiquitination in testis cells. While meiotic sex chromosome inactivation in the XY body prior to meiosis is not affected, H4K16ac is decreased, leading to defects in the replacement of histones by protamines during spermiogenesis. Mice lacking both Rnf8 and Chfr develop thymic lymphomas and chromosomes are frequently altered, due to defects in DNA damage response and defects in damage-induced activation of ATM kinase.</text>
</comment>
<comment type="similarity">
    <text evidence="2">Belongs to the RNF8 family.</text>
</comment>
<comment type="caution">
    <text evidence="14 15">The precise role of Rnf8 at telomeres is subject to debate. 2 publications reported recruitment of Rnf8 at uncapped telomeres followed by regulation of non-homologous end joining (NHEJ), however the 2 publications reported different data and conclusions. According to a report, Rnf8 promotes telomere end protection and inhibits NHEJ by mediating ubiquitination via 'Lys-63'-linked ubiquitin and stabilization of Tpp1 at uncapped telomeres (PubMed:22101936). According to another report, Rnf8 recruitment at uncapped telomeres leads to promote NHEJ and the joining of deprotected chromosome ends by inducing H2A ubiquitination and TP53BP1 recruitment, suggesting that Rnf8 may have a detrimental role in case of telomeric crisis and enhance cancer development by aggravating telomere-induced genome instability (PubMed:21857671).</text>
</comment>
<comment type="caution">
    <text evidence="2">According to a well-established model, RNF8 initiate H2A 'Lys-63'-linked ubiquitination leading to recruitment of RNF168 to amplify H2A 'Lys-63'-linked ubiquitination. However, other data suggest that RNF168 is the priming ubiquitin ligase by mediating monoubiquitination of 'Lys-13' and 'Lys-15' of nucleosomal histone H2A (H2AK13Ub and H2AK15Ub respectively). These data suggest that RNF168 might be recruited to DSBs sites in a RNF8-dependent manner by binding to non-histone proteins ubiquitinated via 'Lys-63'-linked and initiates monoubiquitination of H2A, which is then amplified by RNF8. Additional evidence is however required to confirm these data.</text>
</comment>
<comment type="sequence caution" evidence="13">
    <conflict type="erroneous initiation">
        <sequence resource="EMBL-CDS" id="CAB92239"/>
    </conflict>
    <text>Extended N-terminus.</text>
</comment>
<comment type="sequence caution" evidence="13">
    <conflict type="frameshift">
        <sequence resource="EMBL-CDS" id="CAB92239"/>
    </conflict>
</comment>
<evidence type="ECO:0000250" key="1">
    <source>
        <dbReference type="UniProtKB" id="O76064"/>
    </source>
</evidence>
<evidence type="ECO:0000255" key="2">
    <source>
        <dbReference type="HAMAP-Rule" id="MF_03067"/>
    </source>
</evidence>
<evidence type="ECO:0000256" key="3">
    <source>
        <dbReference type="SAM" id="MobiDB-lite"/>
    </source>
</evidence>
<evidence type="ECO:0000269" key="4">
    <source>
    </source>
</evidence>
<evidence type="ECO:0000269" key="5">
    <source>
    </source>
</evidence>
<evidence type="ECO:0000269" key="6">
    <source>
    </source>
</evidence>
<evidence type="ECO:0000269" key="7">
    <source>
    </source>
</evidence>
<evidence type="ECO:0000269" key="8">
    <source>
    </source>
</evidence>
<evidence type="ECO:0000269" key="9">
    <source>
    </source>
</evidence>
<evidence type="ECO:0000269" key="10">
    <source>
    </source>
</evidence>
<evidence type="ECO:0000269" key="11">
    <source>
    </source>
</evidence>
<evidence type="ECO:0000269" key="12">
    <source>
    </source>
</evidence>
<evidence type="ECO:0000305" key="13"/>
<evidence type="ECO:0000305" key="14">
    <source>
    </source>
</evidence>
<evidence type="ECO:0000305" key="15">
    <source>
    </source>
</evidence>
<organism>
    <name type="scientific">Mus musculus</name>
    <name type="common">Mouse</name>
    <dbReference type="NCBI Taxonomy" id="10090"/>
    <lineage>
        <taxon>Eukaryota</taxon>
        <taxon>Metazoa</taxon>
        <taxon>Chordata</taxon>
        <taxon>Craniata</taxon>
        <taxon>Vertebrata</taxon>
        <taxon>Euteleostomi</taxon>
        <taxon>Mammalia</taxon>
        <taxon>Eutheria</taxon>
        <taxon>Euarchontoglires</taxon>
        <taxon>Glires</taxon>
        <taxon>Rodentia</taxon>
        <taxon>Myomorpha</taxon>
        <taxon>Muroidea</taxon>
        <taxon>Muridae</taxon>
        <taxon>Murinae</taxon>
        <taxon>Mus</taxon>
        <taxon>Mus</taxon>
    </lineage>
</organism>
<proteinExistence type="evidence at protein level"/>
<keyword id="KW-0131">Cell cycle</keyword>
<keyword id="KW-0132">Cell division</keyword>
<keyword id="KW-0156">Chromatin regulator</keyword>
<keyword id="KW-0158">Chromosome</keyword>
<keyword id="KW-0963">Cytoplasm</keyword>
<keyword id="KW-0227">DNA damage</keyword>
<keyword id="KW-0234">DNA repair</keyword>
<keyword id="KW-0479">Metal-binding</keyword>
<keyword id="KW-0498">Mitosis</keyword>
<keyword id="KW-0539">Nucleus</keyword>
<keyword id="KW-0597">Phosphoprotein</keyword>
<keyword id="KW-1185">Reference proteome</keyword>
<keyword id="KW-0779">Telomere</keyword>
<keyword id="KW-0808">Transferase</keyword>
<keyword id="KW-0832">Ubl conjugation</keyword>
<keyword id="KW-0833">Ubl conjugation pathway</keyword>
<keyword id="KW-0862">Zinc</keyword>
<keyword id="KW-0863">Zinc-finger</keyword>
<feature type="chain" id="PRO_0000056049" description="E3 ubiquitin-protein ligase RNF8">
    <location>
        <begin position="1"/>
        <end position="488"/>
    </location>
</feature>
<feature type="domain" description="FHA" evidence="2">
    <location>
        <begin position="38"/>
        <end position="92"/>
    </location>
</feature>
<feature type="zinc finger region" description="RING-type" evidence="2">
    <location>
        <begin position="406"/>
        <end position="444"/>
    </location>
</feature>
<feature type="region of interest" description="Required for interaction with PIWIL1" evidence="2 12">
    <location>
        <begin position="68"/>
        <end position="72"/>
    </location>
</feature>
<feature type="region of interest" description="Disordered" evidence="3">
    <location>
        <begin position="141"/>
        <end position="164"/>
    </location>
</feature>
<feature type="compositionally biased region" description="Basic residues" evidence="3">
    <location>
        <begin position="145"/>
        <end position="156"/>
    </location>
</feature>
<feature type="modified residue" description="Phosphoserine" evidence="1">
    <location>
        <position position="157"/>
    </location>
</feature>
<feature type="mutagenesis site" description="Abolishes interaction with PIWIL1." evidence="12">
    <original>QNPEG</original>
    <variation>AAAAA</variation>
    <location>
        <begin position="68"/>
        <end position="72"/>
    </location>
</feature>
<protein>
    <recommendedName>
        <fullName evidence="2">E3 ubiquitin-protein ligase RNF8</fullName>
        <ecNumber evidence="2">2.3.2.27</ecNumber>
    </recommendedName>
    <alternativeName>
        <fullName>ActA-interacting protein 37</fullName>
        <shortName>AIP37</shortName>
    </alternativeName>
    <alternativeName>
        <fullName>LaXp180</fullName>
    </alternativeName>
    <alternativeName>
        <fullName evidence="2">RING finger protein 8</fullName>
    </alternativeName>
    <alternativeName>
        <fullName evidence="2">RING-type E3 ubiquitin transferase RNF8</fullName>
    </alternativeName>
</protein>
<gene>
    <name evidence="2" type="primary">Rnf8</name>
</gene>
<accession>Q8VC56</accession>
<accession>Q4FJV7</accession>
<accession>Q9JK13</accession>
<dbReference type="EC" id="2.3.2.27" evidence="2"/>
<dbReference type="EMBL" id="AK076180">
    <property type="protein sequence ID" value="BAC36236.1"/>
    <property type="molecule type" value="mRNA"/>
</dbReference>
<dbReference type="EMBL" id="AK147168">
    <property type="protein sequence ID" value="BAE27732.1"/>
    <property type="molecule type" value="mRNA"/>
</dbReference>
<dbReference type="EMBL" id="CT010295">
    <property type="protein sequence ID" value="CAJ18503.1"/>
    <property type="molecule type" value="mRNA"/>
</dbReference>
<dbReference type="EMBL" id="BC021778">
    <property type="protein sequence ID" value="AAH21778.1"/>
    <property type="molecule type" value="mRNA"/>
</dbReference>
<dbReference type="EMBL" id="AJ242721">
    <property type="protein sequence ID" value="CAB92239.1"/>
    <property type="status" value="ALT_FRAME"/>
    <property type="molecule type" value="mRNA"/>
</dbReference>
<dbReference type="CCDS" id="CCDS37538.1"/>
<dbReference type="RefSeq" id="NP_067394.1">
    <property type="nucleotide sequence ID" value="NM_021419.2"/>
</dbReference>
<dbReference type="SMR" id="Q8VC56"/>
<dbReference type="BioGRID" id="208404">
    <property type="interactions" value="7"/>
</dbReference>
<dbReference type="DIP" id="DIP-59448N"/>
<dbReference type="FunCoup" id="Q8VC56">
    <property type="interactions" value="2667"/>
</dbReference>
<dbReference type="IntAct" id="Q8VC56">
    <property type="interactions" value="2"/>
</dbReference>
<dbReference type="MINT" id="Q8VC56"/>
<dbReference type="STRING" id="10090.ENSMUSP00000024817"/>
<dbReference type="iPTMnet" id="Q8VC56"/>
<dbReference type="PhosphoSitePlus" id="Q8VC56"/>
<dbReference type="jPOST" id="Q8VC56"/>
<dbReference type="PaxDb" id="10090-ENSMUSP00000024817"/>
<dbReference type="ProteomicsDB" id="260990"/>
<dbReference type="DNASU" id="58230"/>
<dbReference type="Ensembl" id="ENSMUST00000024817.15">
    <property type="protein sequence ID" value="ENSMUSP00000024817.8"/>
    <property type="gene ID" value="ENSMUSG00000090083.12"/>
</dbReference>
<dbReference type="GeneID" id="58230"/>
<dbReference type="KEGG" id="mmu:58230"/>
<dbReference type="UCSC" id="uc008btf.1">
    <property type="organism name" value="mouse"/>
</dbReference>
<dbReference type="AGR" id="MGI:1929069"/>
<dbReference type="CTD" id="9025"/>
<dbReference type="MGI" id="MGI:1929069">
    <property type="gene designation" value="Rnf8"/>
</dbReference>
<dbReference type="VEuPathDB" id="HostDB:ENSMUSG00000090083"/>
<dbReference type="eggNOG" id="KOG3872">
    <property type="taxonomic scope" value="Eukaryota"/>
</dbReference>
<dbReference type="GeneTree" id="ENSGT00400000022349"/>
<dbReference type="HOGENOM" id="CLU_023453_1_0_1"/>
<dbReference type="InParanoid" id="Q8VC56"/>
<dbReference type="OMA" id="TMISRCH"/>
<dbReference type="OrthoDB" id="5330228at2759"/>
<dbReference type="PhylomeDB" id="Q8VC56"/>
<dbReference type="TreeFam" id="TF330957"/>
<dbReference type="Reactome" id="R-MMU-5693565">
    <property type="pathway name" value="Recruitment and ATM-mediated phosphorylation of repair and signaling proteins at DNA double strand breaks"/>
</dbReference>
<dbReference type="Reactome" id="R-MMU-5693571">
    <property type="pathway name" value="Nonhomologous End-Joining (NHEJ)"/>
</dbReference>
<dbReference type="Reactome" id="R-MMU-5693607">
    <property type="pathway name" value="Processing of DNA double-strand break ends"/>
</dbReference>
<dbReference type="Reactome" id="R-MMU-69473">
    <property type="pathway name" value="G2/M DNA damage checkpoint"/>
</dbReference>
<dbReference type="UniPathway" id="UPA00143"/>
<dbReference type="BioGRID-ORCS" id="58230">
    <property type="hits" value="17 hits in 115 CRISPR screens"/>
</dbReference>
<dbReference type="PRO" id="PR:Q8VC56"/>
<dbReference type="Proteomes" id="UP000000589">
    <property type="component" value="Chromosome 17"/>
</dbReference>
<dbReference type="RNAct" id="Q8VC56">
    <property type="molecule type" value="protein"/>
</dbReference>
<dbReference type="Bgee" id="ENSMUSG00000090083">
    <property type="expression patterns" value="Expressed in primary oocyte and 277 other cell types or tissues"/>
</dbReference>
<dbReference type="ExpressionAtlas" id="Q8VC56">
    <property type="expression patterns" value="baseline and differential"/>
</dbReference>
<dbReference type="GO" id="GO:0000781">
    <property type="term" value="C:chromosome, telomeric region"/>
    <property type="evidence" value="ECO:0000314"/>
    <property type="project" value="UniProtKB"/>
</dbReference>
<dbReference type="GO" id="GO:0005737">
    <property type="term" value="C:cytoplasm"/>
    <property type="evidence" value="ECO:0000314"/>
    <property type="project" value="UniProtKB"/>
</dbReference>
<dbReference type="GO" id="GO:0005829">
    <property type="term" value="C:cytosol"/>
    <property type="evidence" value="ECO:0007669"/>
    <property type="project" value="Ensembl"/>
</dbReference>
<dbReference type="GO" id="GO:0030496">
    <property type="term" value="C:midbody"/>
    <property type="evidence" value="ECO:0007669"/>
    <property type="project" value="UniProtKB-SubCell"/>
</dbReference>
<dbReference type="GO" id="GO:0005654">
    <property type="term" value="C:nucleoplasm"/>
    <property type="evidence" value="ECO:0007669"/>
    <property type="project" value="Ensembl"/>
</dbReference>
<dbReference type="GO" id="GO:0005634">
    <property type="term" value="C:nucleus"/>
    <property type="evidence" value="ECO:0000314"/>
    <property type="project" value="UniProtKB"/>
</dbReference>
<dbReference type="GO" id="GO:0035861">
    <property type="term" value="C:site of double-strand break"/>
    <property type="evidence" value="ECO:0000250"/>
    <property type="project" value="UniProtKB"/>
</dbReference>
<dbReference type="GO" id="GO:0000151">
    <property type="term" value="C:ubiquitin ligase complex"/>
    <property type="evidence" value="ECO:0000250"/>
    <property type="project" value="UniProtKB"/>
</dbReference>
<dbReference type="GO" id="GO:0003682">
    <property type="term" value="F:chromatin binding"/>
    <property type="evidence" value="ECO:0000250"/>
    <property type="project" value="UniProtKB"/>
</dbReference>
<dbReference type="GO" id="GO:0042393">
    <property type="term" value="F:histone binding"/>
    <property type="evidence" value="ECO:0000315"/>
    <property type="project" value="UniProtKB"/>
</dbReference>
<dbReference type="GO" id="GO:0042803">
    <property type="term" value="F:protein homodimerization activity"/>
    <property type="evidence" value="ECO:0000250"/>
    <property type="project" value="UniProtKB"/>
</dbReference>
<dbReference type="GO" id="GO:0043130">
    <property type="term" value="F:ubiquitin binding"/>
    <property type="evidence" value="ECO:0007669"/>
    <property type="project" value="UniProtKB-UniRule"/>
</dbReference>
<dbReference type="GO" id="GO:0061630">
    <property type="term" value="F:ubiquitin protein ligase activity"/>
    <property type="evidence" value="ECO:0000315"/>
    <property type="project" value="MGI"/>
</dbReference>
<dbReference type="GO" id="GO:0031625">
    <property type="term" value="F:ubiquitin protein ligase binding"/>
    <property type="evidence" value="ECO:0007669"/>
    <property type="project" value="Ensembl"/>
</dbReference>
<dbReference type="GO" id="GO:0004842">
    <property type="term" value="F:ubiquitin-protein transferase activity"/>
    <property type="evidence" value="ECO:0000315"/>
    <property type="project" value="UniProtKB"/>
</dbReference>
<dbReference type="GO" id="GO:0008270">
    <property type="term" value="F:zinc ion binding"/>
    <property type="evidence" value="ECO:0000250"/>
    <property type="project" value="UniProtKB"/>
</dbReference>
<dbReference type="GO" id="GO:0051301">
    <property type="term" value="P:cell division"/>
    <property type="evidence" value="ECO:0007669"/>
    <property type="project" value="UniProtKB-KW"/>
</dbReference>
<dbReference type="GO" id="GO:0006974">
    <property type="term" value="P:DNA damage response"/>
    <property type="evidence" value="ECO:0000314"/>
    <property type="project" value="UniProtKB"/>
</dbReference>
<dbReference type="GO" id="GO:0140861">
    <property type="term" value="P:DNA repair-dependent chromatin remodeling"/>
    <property type="evidence" value="ECO:0007669"/>
    <property type="project" value="Ensembl"/>
</dbReference>
<dbReference type="GO" id="GO:0006302">
    <property type="term" value="P:double-strand break repair"/>
    <property type="evidence" value="ECO:0000250"/>
    <property type="project" value="UniProtKB"/>
</dbReference>
<dbReference type="GO" id="GO:0006303">
    <property type="term" value="P:double-strand break repair via nonhomologous end joining"/>
    <property type="evidence" value="ECO:0000315"/>
    <property type="project" value="UniProtKB"/>
</dbReference>
<dbReference type="GO" id="GO:0040029">
    <property type="term" value="P:epigenetic regulation of gene expression"/>
    <property type="evidence" value="ECO:0000250"/>
    <property type="project" value="UniProtKB"/>
</dbReference>
<dbReference type="GO" id="GO:0045190">
    <property type="term" value="P:isotype switching"/>
    <property type="evidence" value="ECO:0000315"/>
    <property type="project" value="UniProtKB"/>
</dbReference>
<dbReference type="GO" id="GO:0034244">
    <property type="term" value="P:negative regulation of transcription elongation by RNA polymerase II"/>
    <property type="evidence" value="ECO:0000250"/>
    <property type="project" value="UniProtKB"/>
</dbReference>
<dbReference type="GO" id="GO:0045739">
    <property type="term" value="P:positive regulation of DNA repair"/>
    <property type="evidence" value="ECO:0000250"/>
    <property type="project" value="UniProtKB"/>
</dbReference>
<dbReference type="GO" id="GO:1905168">
    <property type="term" value="P:positive regulation of double-strand break repair via homologous recombination"/>
    <property type="evidence" value="ECO:0000250"/>
    <property type="project" value="UniProtKB"/>
</dbReference>
<dbReference type="GO" id="GO:0051865">
    <property type="term" value="P:protein autoubiquitination"/>
    <property type="evidence" value="ECO:0007669"/>
    <property type="project" value="Ensembl"/>
</dbReference>
<dbReference type="GO" id="GO:0070936">
    <property type="term" value="P:protein K48-linked ubiquitination"/>
    <property type="evidence" value="ECO:0000250"/>
    <property type="project" value="UniProtKB"/>
</dbReference>
<dbReference type="GO" id="GO:0085020">
    <property type="term" value="P:protein K6-linked ubiquitination"/>
    <property type="evidence" value="ECO:0000250"/>
    <property type="project" value="UniProtKB"/>
</dbReference>
<dbReference type="GO" id="GO:0070534">
    <property type="term" value="P:protein K63-linked ubiquitination"/>
    <property type="evidence" value="ECO:0000250"/>
    <property type="project" value="UniProtKB"/>
</dbReference>
<dbReference type="GO" id="GO:0010212">
    <property type="term" value="P:response to ionizing radiation"/>
    <property type="evidence" value="ECO:0000250"/>
    <property type="project" value="UniProtKB"/>
</dbReference>
<dbReference type="GO" id="GO:0042770">
    <property type="term" value="P:signal transduction in response to DNA damage"/>
    <property type="evidence" value="ECO:0000315"/>
    <property type="project" value="UniProtKB"/>
</dbReference>
<dbReference type="GO" id="GO:0035092">
    <property type="term" value="P:sperm DNA condensation"/>
    <property type="evidence" value="ECO:0000315"/>
    <property type="project" value="UniProtKB"/>
</dbReference>
<dbReference type="GO" id="GO:0006511">
    <property type="term" value="P:ubiquitin-dependent protein catabolic process"/>
    <property type="evidence" value="ECO:0000250"/>
    <property type="project" value="UniProtKB"/>
</dbReference>
<dbReference type="CDD" id="cd22663">
    <property type="entry name" value="FHA_RNF8"/>
    <property type="match status" value="1"/>
</dbReference>
<dbReference type="CDD" id="cd16535">
    <property type="entry name" value="RING-HC_RNF8"/>
    <property type="match status" value="1"/>
</dbReference>
<dbReference type="FunFam" id="1.20.5.170:FF:000050">
    <property type="entry name" value="E3 ubiquitin-protein ligase RNF8"/>
    <property type="match status" value="1"/>
</dbReference>
<dbReference type="FunFam" id="2.60.200.20:FF:000015">
    <property type="entry name" value="E3 ubiquitin-protein ligase RNF8"/>
    <property type="match status" value="1"/>
</dbReference>
<dbReference type="FunFam" id="3.30.40.10:FF:000242">
    <property type="entry name" value="E3 ubiquitin-protein ligase RNF8"/>
    <property type="match status" value="1"/>
</dbReference>
<dbReference type="Gene3D" id="1.20.5.170">
    <property type="match status" value="1"/>
</dbReference>
<dbReference type="Gene3D" id="2.60.200.20">
    <property type="match status" value="1"/>
</dbReference>
<dbReference type="Gene3D" id="3.30.40.10">
    <property type="entry name" value="Zinc/RING finger domain, C3HC4 (zinc finger)"/>
    <property type="match status" value="1"/>
</dbReference>
<dbReference type="HAMAP" id="MF_03067">
    <property type="entry name" value="RNF8"/>
    <property type="match status" value="1"/>
</dbReference>
<dbReference type="InterPro" id="IPR000253">
    <property type="entry name" value="FHA_dom"/>
</dbReference>
<dbReference type="InterPro" id="IPR017335">
    <property type="entry name" value="RNF8"/>
</dbReference>
<dbReference type="InterPro" id="IPR008984">
    <property type="entry name" value="SMAD_FHA_dom_sf"/>
</dbReference>
<dbReference type="InterPro" id="IPR018957">
    <property type="entry name" value="Znf_C3HC4_RING-type"/>
</dbReference>
<dbReference type="InterPro" id="IPR001841">
    <property type="entry name" value="Znf_RING"/>
</dbReference>
<dbReference type="InterPro" id="IPR013083">
    <property type="entry name" value="Znf_RING/FYVE/PHD"/>
</dbReference>
<dbReference type="InterPro" id="IPR017907">
    <property type="entry name" value="Znf_RING_CS"/>
</dbReference>
<dbReference type="PANTHER" id="PTHR15067">
    <property type="entry name" value="E3 UBIQUITIN-PROTEIN LIGASE RNF8"/>
    <property type="match status" value="1"/>
</dbReference>
<dbReference type="PANTHER" id="PTHR15067:SF4">
    <property type="entry name" value="E3 UBIQUITIN-PROTEIN LIGASE RNF8"/>
    <property type="match status" value="1"/>
</dbReference>
<dbReference type="Pfam" id="PF00498">
    <property type="entry name" value="FHA"/>
    <property type="match status" value="1"/>
</dbReference>
<dbReference type="Pfam" id="PF00097">
    <property type="entry name" value="zf-C3HC4"/>
    <property type="match status" value="1"/>
</dbReference>
<dbReference type="PIRSF" id="PIRSF037950">
    <property type="entry name" value="E3_ubiquit_lig_RNF8"/>
    <property type="match status" value="1"/>
</dbReference>
<dbReference type="SMART" id="SM00240">
    <property type="entry name" value="FHA"/>
    <property type="match status" value="1"/>
</dbReference>
<dbReference type="SMART" id="SM00184">
    <property type="entry name" value="RING"/>
    <property type="match status" value="1"/>
</dbReference>
<dbReference type="SUPFAM" id="SSF57850">
    <property type="entry name" value="RING/U-box"/>
    <property type="match status" value="1"/>
</dbReference>
<dbReference type="SUPFAM" id="SSF49879">
    <property type="entry name" value="SMAD/FHA domain"/>
    <property type="match status" value="1"/>
</dbReference>
<dbReference type="PROSITE" id="PS50006">
    <property type="entry name" value="FHA_DOMAIN"/>
    <property type="match status" value="1"/>
</dbReference>
<dbReference type="PROSITE" id="PS00518">
    <property type="entry name" value="ZF_RING_1"/>
    <property type="match status" value="1"/>
</dbReference>
<dbReference type="PROSITE" id="PS50089">
    <property type="entry name" value="ZF_RING_2"/>
    <property type="match status" value="1"/>
</dbReference>
<sequence length="488" mass="55517">MGEPDPLVSGQLAARRSWCLRRLGMDCEWLQLEAGTEVTIGRGLSVTYQLISKVCPLMISRSHCVLKQNPEGQWTIMDNKSLNGVWLNRERLAPLQGYCIRKGDHIQLGVPLESRETAEYEYEVIEEDWESLAPCLAPKNDQRMEKHKGSRTKRKFSSPGLENLPAEGSSDLRCPLANVASKPIEPEKLHGKGDASSQSLGCLCPGLTSLKASERAAGPHACSALPKVLELSCPKKQKACRPSASQNSLELFKVTMSRMLKLKTQMQEKQIAVLNVKRQTRKGSSKKIVRMEKELRNLQSQLYAEQAQQQARVEQLEKTFQEEAHYLQGLEKEQGECDLKQQLVQALQEHQALMEELNCSKKDFEKIIQAKNKELEQTKEEKDKVQAQKEEVLSHMNDLLENELQCIICSEYFIEAVTLNCAHSFCSFCINEWMKRKVECPICRKDIESRTNSLVLDNCISKMVDNLSSDVKERRSVLIRERRAKRLS</sequence>